<proteinExistence type="inferred from homology"/>
<organism>
    <name type="scientific">Salmonella agona (strain SL483)</name>
    <dbReference type="NCBI Taxonomy" id="454166"/>
    <lineage>
        <taxon>Bacteria</taxon>
        <taxon>Pseudomonadati</taxon>
        <taxon>Pseudomonadota</taxon>
        <taxon>Gammaproteobacteria</taxon>
        <taxon>Enterobacterales</taxon>
        <taxon>Enterobacteriaceae</taxon>
        <taxon>Salmonella</taxon>
    </lineage>
</organism>
<reference key="1">
    <citation type="journal article" date="2011" name="J. Bacteriol.">
        <title>Comparative genomics of 28 Salmonella enterica isolates: evidence for CRISPR-mediated adaptive sublineage evolution.</title>
        <authorList>
            <person name="Fricke W.F."/>
            <person name="Mammel M.K."/>
            <person name="McDermott P.F."/>
            <person name="Tartera C."/>
            <person name="White D.G."/>
            <person name="Leclerc J.E."/>
            <person name="Ravel J."/>
            <person name="Cebula T.A."/>
        </authorList>
    </citation>
    <scope>NUCLEOTIDE SEQUENCE [LARGE SCALE GENOMIC DNA]</scope>
    <source>
        <strain>SL483</strain>
    </source>
</reference>
<protein>
    <recommendedName>
        <fullName evidence="1">Peptidase T</fullName>
        <ecNumber evidence="1">3.4.11.4</ecNumber>
    </recommendedName>
    <alternativeName>
        <fullName evidence="1">Aminotripeptidase</fullName>
        <shortName evidence="1">Tripeptidase</shortName>
    </alternativeName>
    <alternativeName>
        <fullName evidence="1">Tripeptide aminopeptidase</fullName>
    </alternativeName>
</protein>
<dbReference type="EC" id="3.4.11.4" evidence="1"/>
<dbReference type="EMBL" id="CP001138">
    <property type="protein sequence ID" value="ACH51200.1"/>
    <property type="molecule type" value="Genomic_DNA"/>
</dbReference>
<dbReference type="RefSeq" id="WP_000359412.1">
    <property type="nucleotide sequence ID" value="NC_011149.1"/>
</dbReference>
<dbReference type="SMR" id="B5F8C6"/>
<dbReference type="MEROPS" id="M20.003"/>
<dbReference type="KEGG" id="sea:SeAg_B1957"/>
<dbReference type="HOGENOM" id="CLU_053676_0_0_6"/>
<dbReference type="Proteomes" id="UP000008819">
    <property type="component" value="Chromosome"/>
</dbReference>
<dbReference type="GO" id="GO:0005829">
    <property type="term" value="C:cytosol"/>
    <property type="evidence" value="ECO:0007669"/>
    <property type="project" value="TreeGrafter"/>
</dbReference>
<dbReference type="GO" id="GO:0008237">
    <property type="term" value="F:metallopeptidase activity"/>
    <property type="evidence" value="ECO:0007669"/>
    <property type="project" value="UniProtKB-KW"/>
</dbReference>
<dbReference type="GO" id="GO:0045148">
    <property type="term" value="F:tripeptide aminopeptidase activity"/>
    <property type="evidence" value="ECO:0007669"/>
    <property type="project" value="UniProtKB-UniRule"/>
</dbReference>
<dbReference type="GO" id="GO:0008270">
    <property type="term" value="F:zinc ion binding"/>
    <property type="evidence" value="ECO:0007669"/>
    <property type="project" value="UniProtKB-UniRule"/>
</dbReference>
<dbReference type="GO" id="GO:0043171">
    <property type="term" value="P:peptide catabolic process"/>
    <property type="evidence" value="ECO:0007669"/>
    <property type="project" value="UniProtKB-UniRule"/>
</dbReference>
<dbReference type="GO" id="GO:0006508">
    <property type="term" value="P:proteolysis"/>
    <property type="evidence" value="ECO:0007669"/>
    <property type="project" value="UniProtKB-UniRule"/>
</dbReference>
<dbReference type="CDD" id="cd03892">
    <property type="entry name" value="M20_peptT"/>
    <property type="match status" value="1"/>
</dbReference>
<dbReference type="FunFam" id="3.30.70.360:FF:000002">
    <property type="entry name" value="Peptidase T"/>
    <property type="match status" value="1"/>
</dbReference>
<dbReference type="Gene3D" id="3.30.70.360">
    <property type="match status" value="1"/>
</dbReference>
<dbReference type="Gene3D" id="3.40.630.10">
    <property type="entry name" value="Zn peptidases"/>
    <property type="match status" value="1"/>
</dbReference>
<dbReference type="HAMAP" id="MF_00550">
    <property type="entry name" value="Aminopeptidase_M20"/>
    <property type="match status" value="1"/>
</dbReference>
<dbReference type="InterPro" id="IPR001261">
    <property type="entry name" value="ArgE/DapE_CS"/>
</dbReference>
<dbReference type="InterPro" id="IPR036264">
    <property type="entry name" value="Bact_exopeptidase_dim_dom"/>
</dbReference>
<dbReference type="InterPro" id="IPR002933">
    <property type="entry name" value="Peptidase_M20"/>
</dbReference>
<dbReference type="InterPro" id="IPR011650">
    <property type="entry name" value="Peptidase_M20_dimer"/>
</dbReference>
<dbReference type="InterPro" id="IPR010161">
    <property type="entry name" value="Peptidase_M20B"/>
</dbReference>
<dbReference type="NCBIfam" id="TIGR01882">
    <property type="entry name" value="peptidase-T"/>
    <property type="match status" value="1"/>
</dbReference>
<dbReference type="NCBIfam" id="NF003976">
    <property type="entry name" value="PRK05469.1"/>
    <property type="match status" value="1"/>
</dbReference>
<dbReference type="NCBIfam" id="NF009920">
    <property type="entry name" value="PRK13381.1"/>
    <property type="match status" value="1"/>
</dbReference>
<dbReference type="PANTHER" id="PTHR42994">
    <property type="entry name" value="PEPTIDASE T"/>
    <property type="match status" value="1"/>
</dbReference>
<dbReference type="PANTHER" id="PTHR42994:SF1">
    <property type="entry name" value="PEPTIDASE T"/>
    <property type="match status" value="1"/>
</dbReference>
<dbReference type="Pfam" id="PF07687">
    <property type="entry name" value="M20_dimer"/>
    <property type="match status" value="1"/>
</dbReference>
<dbReference type="Pfam" id="PF01546">
    <property type="entry name" value="Peptidase_M20"/>
    <property type="match status" value="1"/>
</dbReference>
<dbReference type="PIRSF" id="PIRSF037215">
    <property type="entry name" value="Peptidase_M20B"/>
    <property type="match status" value="1"/>
</dbReference>
<dbReference type="SUPFAM" id="SSF55031">
    <property type="entry name" value="Bacterial exopeptidase dimerisation domain"/>
    <property type="match status" value="1"/>
</dbReference>
<dbReference type="SUPFAM" id="SSF53187">
    <property type="entry name" value="Zn-dependent exopeptidases"/>
    <property type="match status" value="1"/>
</dbReference>
<dbReference type="PROSITE" id="PS00758">
    <property type="entry name" value="ARGE_DAPE_CPG2_1"/>
    <property type="match status" value="1"/>
</dbReference>
<dbReference type="PROSITE" id="PS00759">
    <property type="entry name" value="ARGE_DAPE_CPG2_2"/>
    <property type="match status" value="1"/>
</dbReference>
<gene>
    <name evidence="1" type="primary">pepT</name>
    <name type="ordered locus">SeAg_B1957</name>
</gene>
<name>PEPT_SALA4</name>
<evidence type="ECO:0000255" key="1">
    <source>
        <dbReference type="HAMAP-Rule" id="MF_00550"/>
    </source>
</evidence>
<keyword id="KW-0031">Aminopeptidase</keyword>
<keyword id="KW-0963">Cytoplasm</keyword>
<keyword id="KW-0378">Hydrolase</keyword>
<keyword id="KW-0479">Metal-binding</keyword>
<keyword id="KW-0482">Metalloprotease</keyword>
<keyword id="KW-0645">Protease</keyword>
<keyword id="KW-0862">Zinc</keyword>
<feature type="chain" id="PRO_1000129038" description="Peptidase T">
    <location>
        <begin position="1"/>
        <end position="409"/>
    </location>
</feature>
<feature type="active site" evidence="1">
    <location>
        <position position="80"/>
    </location>
</feature>
<feature type="active site" description="Proton acceptor" evidence="1">
    <location>
        <position position="173"/>
    </location>
</feature>
<feature type="binding site" evidence="1">
    <location>
        <position position="78"/>
    </location>
    <ligand>
        <name>Zn(2+)</name>
        <dbReference type="ChEBI" id="CHEBI:29105"/>
        <label>1</label>
    </ligand>
</feature>
<feature type="binding site" evidence="1">
    <location>
        <position position="140"/>
    </location>
    <ligand>
        <name>Zn(2+)</name>
        <dbReference type="ChEBI" id="CHEBI:29105"/>
        <label>1</label>
    </ligand>
</feature>
<feature type="binding site" evidence="1">
    <location>
        <position position="140"/>
    </location>
    <ligand>
        <name>Zn(2+)</name>
        <dbReference type="ChEBI" id="CHEBI:29105"/>
        <label>2</label>
    </ligand>
</feature>
<feature type="binding site" evidence="1">
    <location>
        <position position="174"/>
    </location>
    <ligand>
        <name>Zn(2+)</name>
        <dbReference type="ChEBI" id="CHEBI:29105"/>
        <label>2</label>
    </ligand>
</feature>
<feature type="binding site" evidence="1">
    <location>
        <position position="196"/>
    </location>
    <ligand>
        <name>Zn(2+)</name>
        <dbReference type="ChEBI" id="CHEBI:29105"/>
        <label>1</label>
    </ligand>
</feature>
<feature type="binding site" evidence="1">
    <location>
        <position position="379"/>
    </location>
    <ligand>
        <name>Zn(2+)</name>
        <dbReference type="ChEBI" id="CHEBI:29105"/>
        <label>2</label>
    </ligand>
</feature>
<sequence>MDKLLERFLHYVSLDTQSKSGVRQVPSTEGQWKLLRLLKQQLEEMGLVNITLSEKGTLMATLPANVEGDIPAIGFISHVDTSPDFSGKNVNPQIVENYRGGDIALGIGDEVLSPVMFPVLHQLLGQTLITTDGKTLLGADDKAGVAEIMTALAVLKGNPIPHGDIKVAFTPDEEVGKGAKHFDVEEFGAQWAYTVDGGGVGELEFENFNAASVNIKIVGNNVHPGTAKGVMVNALSLAARIHAEVPADEAPETTEGYEGFYHLASMKGTVDRAEMHYIIRDFDRKQFEARKRKMMEIAKKVGKGLHPDCYIELVIEDSYYNMREKVVEHPHILDIAQQAMRDCHITPEMKPIRGGTDGAQLSFMGLPCPNLFTGGYNYHGKHEFVTLEGMEKAVQVIVRIAELTAKRGQ</sequence>
<comment type="function">
    <text evidence="1">Cleaves the N-terminal amino acid of tripeptides.</text>
</comment>
<comment type="catalytic activity">
    <reaction evidence="1">
        <text>Release of the N-terminal residue from a tripeptide.</text>
        <dbReference type="EC" id="3.4.11.4"/>
    </reaction>
</comment>
<comment type="cofactor">
    <cofactor evidence="1">
        <name>Zn(2+)</name>
        <dbReference type="ChEBI" id="CHEBI:29105"/>
    </cofactor>
    <text evidence="1">Binds 2 Zn(2+) ions per subunit.</text>
</comment>
<comment type="subcellular location">
    <subcellularLocation>
        <location evidence="1">Cytoplasm</location>
    </subcellularLocation>
</comment>
<comment type="similarity">
    <text evidence="1">Belongs to the peptidase M20B family.</text>
</comment>
<accession>B5F8C6</accession>